<protein>
    <recommendedName>
        <fullName>Ribosome assembly 1 protein</fullName>
    </recommendedName>
</protein>
<feature type="chain" id="PRO_0000097460" description="Ribosome assembly 1 protein">
    <location>
        <begin position="1"/>
        <end position="381"/>
    </location>
</feature>
<feature type="region of interest" description="Disordered" evidence="1">
    <location>
        <begin position="1"/>
        <end position="38"/>
    </location>
</feature>
<feature type="region of interest" description="Disordered" evidence="1">
    <location>
        <begin position="164"/>
        <end position="216"/>
    </location>
</feature>
<feature type="region of interest" description="Disordered" evidence="1">
    <location>
        <begin position="350"/>
        <end position="381"/>
    </location>
</feature>
<feature type="compositionally biased region" description="Basic residues" evidence="1">
    <location>
        <begin position="359"/>
        <end position="371"/>
    </location>
</feature>
<feature type="modified residue" description="N-acetylmethionine" evidence="4">
    <location>
        <position position="1"/>
    </location>
</feature>
<feature type="modified residue" description="Phosphoserine" evidence="3">
    <location>
        <position position="172"/>
    </location>
</feature>
<feature type="helix" evidence="6">
    <location>
        <begin position="240"/>
        <end position="256"/>
    </location>
</feature>
<feature type="helix" evidence="6">
    <location>
        <begin position="261"/>
        <end position="264"/>
    </location>
</feature>
<feature type="helix" evidence="5">
    <location>
        <begin position="320"/>
        <end position="334"/>
    </location>
</feature>
<feature type="helix" evidence="5">
    <location>
        <begin position="343"/>
        <end position="349"/>
    </location>
</feature>
<accession>Q08932</accession>
<accession>D6W3H5</accession>
<proteinExistence type="evidence at protein level"/>
<keyword id="KW-0002">3D-structure</keyword>
<keyword id="KW-0007">Acetylation</keyword>
<keyword id="KW-0539">Nucleus</keyword>
<keyword id="KW-0597">Phosphoprotein</keyword>
<keyword id="KW-1185">Reference proteome</keyword>
<keyword id="KW-0690">Ribosome biogenesis</keyword>
<comment type="function">
    <text>Involved in a late nucleoplasmic step of 60S ribosomal subunit assembly.</text>
</comment>
<comment type="interaction">
    <interactant intactId="EBI-16186">
        <id>Q08932</id>
    </interactant>
    <interactant intactId="EBI-8359">
        <id>P46973</id>
        <label>HIT1</label>
    </interactant>
    <organismsDiffer>false</organismsDiffer>
    <experiments>9</experiments>
</comment>
<comment type="subcellular location">
    <subcellularLocation>
        <location>Nucleus</location>
    </subcellularLocation>
</comment>
<comment type="miscellaneous">
    <text evidence="2">Present with 259 molecules/cell in log phase SD medium.</text>
</comment>
<dbReference type="EMBL" id="Z73549">
    <property type="protein sequence ID" value="CAA97906.1"/>
    <property type="molecule type" value="Genomic_DNA"/>
</dbReference>
<dbReference type="EMBL" id="BK006949">
    <property type="protein sequence ID" value="DAA11241.1"/>
    <property type="molecule type" value="Genomic_DNA"/>
</dbReference>
<dbReference type="PIR" id="S65212">
    <property type="entry name" value="S65212"/>
</dbReference>
<dbReference type="RefSeq" id="NP_015131.1">
    <property type="nucleotide sequence ID" value="NM_001184007.1"/>
</dbReference>
<dbReference type="PDB" id="2M3F">
    <property type="method" value="NMR"/>
    <property type="chains" value="A=238-259"/>
</dbReference>
<dbReference type="PDB" id="2MJF">
    <property type="method" value="NMR"/>
    <property type="chains" value="A=317-352"/>
</dbReference>
<dbReference type="PDB" id="4NUT">
    <property type="method" value="X-ray"/>
    <property type="resolution" value="1.55 A"/>
    <property type="chains" value="B=238-290"/>
</dbReference>
<dbReference type="PDBsum" id="2M3F"/>
<dbReference type="PDBsum" id="2MJF"/>
<dbReference type="PDBsum" id="4NUT"/>
<dbReference type="BMRB" id="Q08932"/>
<dbReference type="SMR" id="Q08932"/>
<dbReference type="BioGRID" id="35990">
    <property type="interactions" value="46"/>
</dbReference>
<dbReference type="DIP" id="DIP-5698N"/>
<dbReference type="FunCoup" id="Q08932">
    <property type="interactions" value="73"/>
</dbReference>
<dbReference type="IntAct" id="Q08932">
    <property type="interactions" value="6"/>
</dbReference>
<dbReference type="STRING" id="4932.YPL193W"/>
<dbReference type="GlyGen" id="Q08932">
    <property type="glycosylation" value="2 sites, 1 O-linked glycan (2 sites)"/>
</dbReference>
<dbReference type="iPTMnet" id="Q08932"/>
<dbReference type="PaxDb" id="4932-YPL193W"/>
<dbReference type="PeptideAtlas" id="Q08932"/>
<dbReference type="EnsemblFungi" id="YPL193W_mRNA">
    <property type="protein sequence ID" value="YPL193W"/>
    <property type="gene ID" value="YPL193W"/>
</dbReference>
<dbReference type="GeneID" id="855908"/>
<dbReference type="KEGG" id="sce:YPL193W"/>
<dbReference type="AGR" id="SGD:S000006114"/>
<dbReference type="SGD" id="S000006114">
    <property type="gene designation" value="RSA1"/>
</dbReference>
<dbReference type="VEuPathDB" id="FungiDB:YPL193W"/>
<dbReference type="eggNOG" id="ENOG502S1E3">
    <property type="taxonomic scope" value="Eukaryota"/>
</dbReference>
<dbReference type="HOGENOM" id="CLU_038609_0_0_1"/>
<dbReference type="InParanoid" id="Q08932"/>
<dbReference type="OMA" id="YCENTQA"/>
<dbReference type="OrthoDB" id="273070at2759"/>
<dbReference type="BioCyc" id="YEAST:G3O-34086-MONOMER"/>
<dbReference type="BioGRID-ORCS" id="855908">
    <property type="hits" value="2 hits in 10 CRISPR screens"/>
</dbReference>
<dbReference type="EvolutionaryTrace" id="Q08932"/>
<dbReference type="PRO" id="PR:Q08932"/>
<dbReference type="Proteomes" id="UP000002311">
    <property type="component" value="Chromosome XVI"/>
</dbReference>
<dbReference type="RNAct" id="Q08932">
    <property type="molecule type" value="protein"/>
</dbReference>
<dbReference type="GO" id="GO:0005654">
    <property type="term" value="C:nucleoplasm"/>
    <property type="evidence" value="ECO:0000314"/>
    <property type="project" value="SGD"/>
</dbReference>
<dbReference type="GO" id="GO:0000492">
    <property type="term" value="P:box C/D snoRNP assembly"/>
    <property type="evidence" value="ECO:0000315"/>
    <property type="project" value="SGD"/>
</dbReference>
<dbReference type="GO" id="GO:0000027">
    <property type="term" value="P:ribosomal large subunit assembly"/>
    <property type="evidence" value="ECO:0000315"/>
    <property type="project" value="SGD"/>
</dbReference>
<dbReference type="Gene3D" id="6.10.250.1790">
    <property type="match status" value="1"/>
</dbReference>
<dbReference type="InterPro" id="IPR019496">
    <property type="entry name" value="NUFIP1_cons_dom"/>
</dbReference>
<dbReference type="Pfam" id="PF10453">
    <property type="entry name" value="NUFIP1"/>
    <property type="match status" value="1"/>
</dbReference>
<name>RSA1_YEAST</name>
<reference key="1">
    <citation type="journal article" date="1997" name="Nature">
        <title>The nucleotide sequence of Saccharomyces cerevisiae chromosome XVI.</title>
        <authorList>
            <person name="Bussey H."/>
            <person name="Storms R.K."/>
            <person name="Ahmed A."/>
            <person name="Albermann K."/>
            <person name="Allen E."/>
            <person name="Ansorge W."/>
            <person name="Araujo R."/>
            <person name="Aparicio A."/>
            <person name="Barrell B.G."/>
            <person name="Badcock K."/>
            <person name="Benes V."/>
            <person name="Botstein D."/>
            <person name="Bowman S."/>
            <person name="Brueckner M."/>
            <person name="Carpenter J."/>
            <person name="Cherry J.M."/>
            <person name="Chung E."/>
            <person name="Churcher C.M."/>
            <person name="Coster F."/>
            <person name="Davis K."/>
            <person name="Davis R.W."/>
            <person name="Dietrich F.S."/>
            <person name="Delius H."/>
            <person name="DiPaolo T."/>
            <person name="Dubois E."/>
            <person name="Duesterhoeft A."/>
            <person name="Duncan M."/>
            <person name="Floeth M."/>
            <person name="Fortin N."/>
            <person name="Friesen J.D."/>
            <person name="Fritz C."/>
            <person name="Goffeau A."/>
            <person name="Hall J."/>
            <person name="Hebling U."/>
            <person name="Heumann K."/>
            <person name="Hilbert H."/>
            <person name="Hillier L.W."/>
            <person name="Hunicke-Smith S."/>
            <person name="Hyman R.W."/>
            <person name="Johnston M."/>
            <person name="Kalman S."/>
            <person name="Kleine K."/>
            <person name="Komp C."/>
            <person name="Kurdi O."/>
            <person name="Lashkari D."/>
            <person name="Lew H."/>
            <person name="Lin A."/>
            <person name="Lin D."/>
            <person name="Louis E.J."/>
            <person name="Marathe R."/>
            <person name="Messenguy F."/>
            <person name="Mewes H.-W."/>
            <person name="Mirtipati S."/>
            <person name="Moestl D."/>
            <person name="Mueller-Auer S."/>
            <person name="Namath A."/>
            <person name="Nentwich U."/>
            <person name="Oefner P."/>
            <person name="Pearson D."/>
            <person name="Petel F.X."/>
            <person name="Pohl T.M."/>
            <person name="Purnelle B."/>
            <person name="Rajandream M.A."/>
            <person name="Rechmann S."/>
            <person name="Rieger M."/>
            <person name="Riles L."/>
            <person name="Roberts D."/>
            <person name="Schaefer M."/>
            <person name="Scharfe M."/>
            <person name="Scherens B."/>
            <person name="Schramm S."/>
            <person name="Schroeder M."/>
            <person name="Sdicu A.-M."/>
            <person name="Tettelin H."/>
            <person name="Urrestarazu L.A."/>
            <person name="Ushinsky S."/>
            <person name="Vierendeels F."/>
            <person name="Vissers S."/>
            <person name="Voss H."/>
            <person name="Walsh S.V."/>
            <person name="Wambutt R."/>
            <person name="Wang Y."/>
            <person name="Wedler E."/>
            <person name="Wedler H."/>
            <person name="Winnett E."/>
            <person name="Zhong W.-W."/>
            <person name="Zollner A."/>
            <person name="Vo D.H."/>
            <person name="Hani J."/>
        </authorList>
    </citation>
    <scope>NUCLEOTIDE SEQUENCE [LARGE SCALE GENOMIC DNA]</scope>
    <source>
        <strain>ATCC 204508 / S288c</strain>
    </source>
</reference>
<reference key="2">
    <citation type="journal article" date="2014" name="G3 (Bethesda)">
        <title>The reference genome sequence of Saccharomyces cerevisiae: Then and now.</title>
        <authorList>
            <person name="Engel S.R."/>
            <person name="Dietrich F.S."/>
            <person name="Fisk D.G."/>
            <person name="Binkley G."/>
            <person name="Balakrishnan R."/>
            <person name="Costanzo M.C."/>
            <person name="Dwight S.S."/>
            <person name="Hitz B.C."/>
            <person name="Karra K."/>
            <person name="Nash R.S."/>
            <person name="Weng S."/>
            <person name="Wong E.D."/>
            <person name="Lloyd P."/>
            <person name="Skrzypek M.S."/>
            <person name="Miyasato S.R."/>
            <person name="Simison M."/>
            <person name="Cherry J.M."/>
        </authorList>
    </citation>
    <scope>GENOME REANNOTATION</scope>
    <source>
        <strain>ATCC 204508 / S288c</strain>
    </source>
</reference>
<reference key="3">
    <citation type="journal article" date="1999" name="Mol. Cell. Biol.">
        <title>Synthetic lethality with conditional dbp6 alleles identifies Rsa1p, a nucleoplasmic protein involved in the assembly of 60S ribosomal subunits.</title>
        <authorList>
            <person name="Kressler D."/>
            <person name="Doere M."/>
            <person name="Rojo M."/>
            <person name="Linder P."/>
        </authorList>
    </citation>
    <scope>CHARACTERIZATION</scope>
</reference>
<reference key="4">
    <citation type="journal article" date="2003" name="Nature">
        <title>Global analysis of protein expression in yeast.</title>
        <authorList>
            <person name="Ghaemmaghami S."/>
            <person name="Huh W.-K."/>
            <person name="Bower K."/>
            <person name="Howson R.W."/>
            <person name="Belle A."/>
            <person name="Dephoure N."/>
            <person name="O'Shea E.K."/>
            <person name="Weissman J.S."/>
        </authorList>
    </citation>
    <scope>LEVEL OF PROTEIN EXPRESSION [LARGE SCALE ANALYSIS]</scope>
</reference>
<reference key="5">
    <citation type="journal article" date="2008" name="Mol. Cell. Proteomics">
        <title>A multidimensional chromatography technology for in-depth phosphoproteome analysis.</title>
        <authorList>
            <person name="Albuquerque C.P."/>
            <person name="Smolka M.B."/>
            <person name="Payne S.H."/>
            <person name="Bafna V."/>
            <person name="Eng J."/>
            <person name="Zhou H."/>
        </authorList>
    </citation>
    <scope>PHOSPHORYLATION [LARGE SCALE ANALYSIS] AT SER-172</scope>
    <scope>IDENTIFICATION BY MASS SPECTROMETRY [LARGE SCALE ANALYSIS]</scope>
</reference>
<reference key="6">
    <citation type="journal article" date="2012" name="Proc. Natl. Acad. Sci. U.S.A.">
        <title>N-terminal acetylome analyses and functional insights of the N-terminal acetyltransferase NatB.</title>
        <authorList>
            <person name="Van Damme P."/>
            <person name="Lasa M."/>
            <person name="Polevoda B."/>
            <person name="Gazquez C."/>
            <person name="Elosegui-Artola A."/>
            <person name="Kim D.S."/>
            <person name="De Juan-Pardo E."/>
            <person name="Demeyer K."/>
            <person name="Hole K."/>
            <person name="Larrea E."/>
            <person name="Timmerman E."/>
            <person name="Prieto J."/>
            <person name="Arnesen T."/>
            <person name="Sherman F."/>
            <person name="Gevaert K."/>
            <person name="Aldabe R."/>
        </authorList>
    </citation>
    <scope>ACETYLATION [LARGE SCALE ANALYSIS] AT MET-1</scope>
    <scope>IDENTIFICATION BY MASS SPECTROMETRY [LARGE SCALE ANALYSIS]</scope>
</reference>
<evidence type="ECO:0000256" key="1">
    <source>
        <dbReference type="SAM" id="MobiDB-lite"/>
    </source>
</evidence>
<evidence type="ECO:0000269" key="2">
    <source>
    </source>
</evidence>
<evidence type="ECO:0007744" key="3">
    <source>
    </source>
</evidence>
<evidence type="ECO:0007744" key="4">
    <source>
    </source>
</evidence>
<evidence type="ECO:0007829" key="5">
    <source>
        <dbReference type="PDB" id="2MJF"/>
    </source>
</evidence>
<evidence type="ECO:0007829" key="6">
    <source>
        <dbReference type="PDB" id="4NUT"/>
    </source>
</evidence>
<sequence length="381" mass="43998">MNYNNFENSKGDGHSRLPKPTYSGTLSDGYDESKIKRQKTDSAFNAAYSPHMYPNSPYYEGSWNTGYTPQLHHVAPHNQYFHPIQPSTQYNYTSPPNYTENYIPPVHQNISYAPALNLQKWPSSYCENTQALKNDKDYQTSISYEDVAIPTVKEIQLIEKNRGKDTFMNEISPVPSSKDQASAEPTEIPRKDPELANSNAEDDHNNLGLEDDDRDEQLESEGLGKVVLVPGTSIALITDEDVKKWREERKKMWLLKISNNKQKHMQEMGIKEDELKSQPSIFKESRKEKQFIQSIQNQVQRGNPKIDLNLKLIQREFANENSQLLDFIRELGDVGLLEYELSQQEKDVLFGSSEDNNKNHYKPNYKNRKPNLSRANFTRNK</sequence>
<gene>
    <name type="primary">RSA1</name>
    <name type="ordered locus">YPL193W</name>
</gene>
<organism>
    <name type="scientific">Saccharomyces cerevisiae (strain ATCC 204508 / S288c)</name>
    <name type="common">Baker's yeast</name>
    <dbReference type="NCBI Taxonomy" id="559292"/>
    <lineage>
        <taxon>Eukaryota</taxon>
        <taxon>Fungi</taxon>
        <taxon>Dikarya</taxon>
        <taxon>Ascomycota</taxon>
        <taxon>Saccharomycotina</taxon>
        <taxon>Saccharomycetes</taxon>
        <taxon>Saccharomycetales</taxon>
        <taxon>Saccharomycetaceae</taxon>
        <taxon>Saccharomyces</taxon>
    </lineage>
</organism>